<gene>
    <name type="ordered locus">BP1738</name>
</gene>
<sequence>MNNDIVAGKWKQLTGKAKAAWGELTDDELTRTEGNAERLAGLIQERYGKTKEQAQREVREFFDRNP</sequence>
<keyword id="KW-1185">Reference proteome</keyword>
<feature type="chain" id="PRO_0000209991" description="UPF0337 protein BP1738">
    <location>
        <begin position="1"/>
        <end position="66"/>
    </location>
</feature>
<accession>Q7VXL5</accession>
<protein>
    <recommendedName>
        <fullName>UPF0337 protein BP1738</fullName>
    </recommendedName>
</protein>
<organism>
    <name type="scientific">Bordetella pertussis (strain Tohama I / ATCC BAA-589 / NCTC 13251)</name>
    <dbReference type="NCBI Taxonomy" id="257313"/>
    <lineage>
        <taxon>Bacteria</taxon>
        <taxon>Pseudomonadati</taxon>
        <taxon>Pseudomonadota</taxon>
        <taxon>Betaproteobacteria</taxon>
        <taxon>Burkholderiales</taxon>
        <taxon>Alcaligenaceae</taxon>
        <taxon>Bordetella</taxon>
    </lineage>
</organism>
<evidence type="ECO:0000305" key="1"/>
<comment type="similarity">
    <text evidence="1">Belongs to the UPF0337 (CsbD) family.</text>
</comment>
<name>Y1738_BORPE</name>
<reference key="1">
    <citation type="journal article" date="2003" name="Nat. Genet.">
        <title>Comparative analysis of the genome sequences of Bordetella pertussis, Bordetella parapertussis and Bordetella bronchiseptica.</title>
        <authorList>
            <person name="Parkhill J."/>
            <person name="Sebaihia M."/>
            <person name="Preston A."/>
            <person name="Murphy L.D."/>
            <person name="Thomson N.R."/>
            <person name="Harris D.E."/>
            <person name="Holden M.T.G."/>
            <person name="Churcher C.M."/>
            <person name="Bentley S.D."/>
            <person name="Mungall K.L."/>
            <person name="Cerdeno-Tarraga A.-M."/>
            <person name="Temple L."/>
            <person name="James K.D."/>
            <person name="Harris B."/>
            <person name="Quail M.A."/>
            <person name="Achtman M."/>
            <person name="Atkin R."/>
            <person name="Baker S."/>
            <person name="Basham D."/>
            <person name="Bason N."/>
            <person name="Cherevach I."/>
            <person name="Chillingworth T."/>
            <person name="Collins M."/>
            <person name="Cronin A."/>
            <person name="Davis P."/>
            <person name="Doggett J."/>
            <person name="Feltwell T."/>
            <person name="Goble A."/>
            <person name="Hamlin N."/>
            <person name="Hauser H."/>
            <person name="Holroyd S."/>
            <person name="Jagels K."/>
            <person name="Leather S."/>
            <person name="Moule S."/>
            <person name="Norberczak H."/>
            <person name="O'Neil S."/>
            <person name="Ormond D."/>
            <person name="Price C."/>
            <person name="Rabbinowitsch E."/>
            <person name="Rutter S."/>
            <person name="Sanders M."/>
            <person name="Saunders D."/>
            <person name="Seeger K."/>
            <person name="Sharp S."/>
            <person name="Simmonds M."/>
            <person name="Skelton J."/>
            <person name="Squares R."/>
            <person name="Squares S."/>
            <person name="Stevens K."/>
            <person name="Unwin L."/>
            <person name="Whitehead S."/>
            <person name="Barrell B.G."/>
            <person name="Maskell D.J."/>
        </authorList>
    </citation>
    <scope>NUCLEOTIDE SEQUENCE [LARGE SCALE GENOMIC DNA]</scope>
    <source>
        <strain>Tohama I / ATCC BAA-589 / NCTC 13251</strain>
    </source>
</reference>
<dbReference type="EMBL" id="BX640416">
    <property type="protein sequence ID" value="CAE42025.1"/>
    <property type="molecule type" value="Genomic_DNA"/>
</dbReference>
<dbReference type="RefSeq" id="NP_880452.1">
    <property type="nucleotide sequence ID" value="NC_002929.2"/>
</dbReference>
<dbReference type="RefSeq" id="WP_003813568.1">
    <property type="nucleotide sequence ID" value="NZ_CP039022.1"/>
</dbReference>
<dbReference type="SMR" id="Q7VXL5"/>
<dbReference type="STRING" id="257313.BP1738"/>
<dbReference type="PaxDb" id="257313-BP1738"/>
<dbReference type="KEGG" id="bpe:BP1738"/>
<dbReference type="PATRIC" id="fig|257313.5.peg.1865"/>
<dbReference type="eggNOG" id="COG3237">
    <property type="taxonomic scope" value="Bacteria"/>
</dbReference>
<dbReference type="HOGENOM" id="CLU_135567_4_3_4"/>
<dbReference type="Proteomes" id="UP000002676">
    <property type="component" value="Chromosome"/>
</dbReference>
<dbReference type="Gene3D" id="1.10.1470.10">
    <property type="entry name" value="YjbJ"/>
    <property type="match status" value="1"/>
</dbReference>
<dbReference type="InterPro" id="IPR008462">
    <property type="entry name" value="CsbD"/>
</dbReference>
<dbReference type="InterPro" id="IPR050423">
    <property type="entry name" value="UPF0337_stress_rsp"/>
</dbReference>
<dbReference type="InterPro" id="IPR026042">
    <property type="entry name" value="YjbJ"/>
</dbReference>
<dbReference type="InterPro" id="IPR036629">
    <property type="entry name" value="YjbJ_sf"/>
</dbReference>
<dbReference type="PANTHER" id="PTHR34977">
    <property type="entry name" value="UPF0337 PROTEIN YJBJ"/>
    <property type="match status" value="1"/>
</dbReference>
<dbReference type="PANTHER" id="PTHR34977:SF1">
    <property type="entry name" value="UPF0337 PROTEIN YJBJ"/>
    <property type="match status" value="1"/>
</dbReference>
<dbReference type="Pfam" id="PF05532">
    <property type="entry name" value="CsbD"/>
    <property type="match status" value="1"/>
</dbReference>
<dbReference type="PIRSF" id="PIRSF039008">
    <property type="entry name" value="YjbJ"/>
    <property type="match status" value="1"/>
</dbReference>
<dbReference type="SUPFAM" id="SSF69047">
    <property type="entry name" value="Hypothetical protein YjbJ"/>
    <property type="match status" value="1"/>
</dbReference>
<proteinExistence type="inferred from homology"/>